<gene>
    <name evidence="1" type="primary">nrdR</name>
    <name type="ordered locus">RER_27780</name>
</gene>
<keyword id="KW-0067">ATP-binding</keyword>
<keyword id="KW-0238">DNA-binding</keyword>
<keyword id="KW-0479">Metal-binding</keyword>
<keyword id="KW-0547">Nucleotide-binding</keyword>
<keyword id="KW-0678">Repressor</keyword>
<keyword id="KW-0804">Transcription</keyword>
<keyword id="KW-0805">Transcription regulation</keyword>
<keyword id="KW-0862">Zinc</keyword>
<keyword id="KW-0863">Zinc-finger</keyword>
<protein>
    <recommendedName>
        <fullName evidence="1">Transcriptional repressor NrdR</fullName>
    </recommendedName>
</protein>
<dbReference type="EMBL" id="AP008957">
    <property type="protein sequence ID" value="BAH33486.1"/>
    <property type="molecule type" value="Genomic_DNA"/>
</dbReference>
<dbReference type="RefSeq" id="WP_020907539.1">
    <property type="nucleotide sequence ID" value="NC_012490.1"/>
</dbReference>
<dbReference type="SMR" id="C0ZYQ1"/>
<dbReference type="GeneID" id="57487248"/>
<dbReference type="KEGG" id="rer:RER_27780"/>
<dbReference type="eggNOG" id="COG1327">
    <property type="taxonomic scope" value="Bacteria"/>
</dbReference>
<dbReference type="HOGENOM" id="CLU_108412_1_0_11"/>
<dbReference type="Proteomes" id="UP000002204">
    <property type="component" value="Chromosome"/>
</dbReference>
<dbReference type="GO" id="GO:0005524">
    <property type="term" value="F:ATP binding"/>
    <property type="evidence" value="ECO:0007669"/>
    <property type="project" value="UniProtKB-KW"/>
</dbReference>
<dbReference type="GO" id="GO:0003677">
    <property type="term" value="F:DNA binding"/>
    <property type="evidence" value="ECO:0007669"/>
    <property type="project" value="UniProtKB-KW"/>
</dbReference>
<dbReference type="GO" id="GO:0008270">
    <property type="term" value="F:zinc ion binding"/>
    <property type="evidence" value="ECO:0007669"/>
    <property type="project" value="UniProtKB-UniRule"/>
</dbReference>
<dbReference type="GO" id="GO:0045892">
    <property type="term" value="P:negative regulation of DNA-templated transcription"/>
    <property type="evidence" value="ECO:0007669"/>
    <property type="project" value="UniProtKB-UniRule"/>
</dbReference>
<dbReference type="HAMAP" id="MF_00440">
    <property type="entry name" value="NrdR"/>
    <property type="match status" value="1"/>
</dbReference>
<dbReference type="InterPro" id="IPR005144">
    <property type="entry name" value="ATP-cone_dom"/>
</dbReference>
<dbReference type="InterPro" id="IPR055173">
    <property type="entry name" value="NrdR-like_N"/>
</dbReference>
<dbReference type="InterPro" id="IPR003796">
    <property type="entry name" value="RNR_NrdR-like"/>
</dbReference>
<dbReference type="NCBIfam" id="TIGR00244">
    <property type="entry name" value="transcriptional regulator NrdR"/>
    <property type="match status" value="1"/>
</dbReference>
<dbReference type="PANTHER" id="PTHR30455">
    <property type="entry name" value="TRANSCRIPTIONAL REPRESSOR NRDR"/>
    <property type="match status" value="1"/>
</dbReference>
<dbReference type="PANTHER" id="PTHR30455:SF2">
    <property type="entry name" value="TRANSCRIPTIONAL REPRESSOR NRDR"/>
    <property type="match status" value="1"/>
</dbReference>
<dbReference type="Pfam" id="PF03477">
    <property type="entry name" value="ATP-cone"/>
    <property type="match status" value="1"/>
</dbReference>
<dbReference type="Pfam" id="PF22811">
    <property type="entry name" value="Zn_ribbon_NrdR"/>
    <property type="match status" value="1"/>
</dbReference>
<dbReference type="PROSITE" id="PS51161">
    <property type="entry name" value="ATP_CONE"/>
    <property type="match status" value="1"/>
</dbReference>
<comment type="function">
    <text evidence="1">Negatively regulates transcription of bacterial ribonucleotide reductase nrd genes and operons by binding to NrdR-boxes.</text>
</comment>
<comment type="cofactor">
    <cofactor evidence="1">
        <name>Zn(2+)</name>
        <dbReference type="ChEBI" id="CHEBI:29105"/>
    </cofactor>
    <text evidence="1">Binds 1 zinc ion.</text>
</comment>
<comment type="similarity">
    <text evidence="1">Belongs to the NrdR family.</text>
</comment>
<proteinExistence type="inferred from homology"/>
<name>NRDR_RHOE4</name>
<sequence>MHCPFCRHPDSRVVDSREADEGQAIRRRRSCPECGRRFTTVETAVLSVVKRSGVTEPFSREKVVKGVRRACQGRQVDNDSLNLLAQQVEDAVRASGSAEIPSNEVGLAILDPLRNLDEVAYLRFASVYKSFSSAADFEREITDMREHAETRAADKASGAETVSVD</sequence>
<reference key="1">
    <citation type="submission" date="2005-03" db="EMBL/GenBank/DDBJ databases">
        <title>Comparison of the complete genome sequences of Rhodococcus erythropolis PR4 and Rhodococcus opacus B4.</title>
        <authorList>
            <person name="Takarada H."/>
            <person name="Sekine M."/>
            <person name="Hosoyama A."/>
            <person name="Yamada R."/>
            <person name="Fujisawa T."/>
            <person name="Omata S."/>
            <person name="Shimizu A."/>
            <person name="Tsukatani N."/>
            <person name="Tanikawa S."/>
            <person name="Fujita N."/>
            <person name="Harayama S."/>
        </authorList>
    </citation>
    <scope>NUCLEOTIDE SEQUENCE [LARGE SCALE GENOMIC DNA]</scope>
    <source>
        <strain>PR4 / NBRC 100887</strain>
    </source>
</reference>
<evidence type="ECO:0000255" key="1">
    <source>
        <dbReference type="HAMAP-Rule" id="MF_00440"/>
    </source>
</evidence>
<feature type="chain" id="PRO_1000206125" description="Transcriptional repressor NrdR">
    <location>
        <begin position="1"/>
        <end position="165"/>
    </location>
</feature>
<feature type="domain" description="ATP-cone" evidence="1">
    <location>
        <begin position="46"/>
        <end position="136"/>
    </location>
</feature>
<feature type="zinc finger region" evidence="1">
    <location>
        <begin position="3"/>
        <end position="34"/>
    </location>
</feature>
<organism>
    <name type="scientific">Rhodococcus erythropolis (strain PR4 / NBRC 100887)</name>
    <dbReference type="NCBI Taxonomy" id="234621"/>
    <lineage>
        <taxon>Bacteria</taxon>
        <taxon>Bacillati</taxon>
        <taxon>Actinomycetota</taxon>
        <taxon>Actinomycetes</taxon>
        <taxon>Mycobacteriales</taxon>
        <taxon>Nocardiaceae</taxon>
        <taxon>Rhodococcus</taxon>
        <taxon>Rhodococcus erythropolis group</taxon>
    </lineage>
</organism>
<accession>C0ZYQ1</accession>